<evidence type="ECO:0000255" key="1">
    <source>
        <dbReference type="HAMAP-Rule" id="MF_00423"/>
    </source>
</evidence>
<dbReference type="EC" id="2.9.1.1" evidence="1"/>
<dbReference type="EMBL" id="CP001600">
    <property type="protein sequence ID" value="ACR70608.1"/>
    <property type="molecule type" value="Genomic_DNA"/>
</dbReference>
<dbReference type="RefSeq" id="WP_015872681.1">
    <property type="nucleotide sequence ID" value="NZ_CP169062.1"/>
</dbReference>
<dbReference type="SMR" id="C5BC01"/>
<dbReference type="STRING" id="67780.B6E78_08995"/>
<dbReference type="GeneID" id="69540320"/>
<dbReference type="KEGG" id="eic:NT01EI_3472"/>
<dbReference type="PATRIC" id="fig|634503.3.peg.3090"/>
<dbReference type="HOGENOM" id="CLU_038142_1_0_6"/>
<dbReference type="OrthoDB" id="9787096at2"/>
<dbReference type="UniPathway" id="UPA00906">
    <property type="reaction ID" value="UER00896"/>
</dbReference>
<dbReference type="Proteomes" id="UP000001485">
    <property type="component" value="Chromosome"/>
</dbReference>
<dbReference type="GO" id="GO:0005737">
    <property type="term" value="C:cytoplasm"/>
    <property type="evidence" value="ECO:0007669"/>
    <property type="project" value="UniProtKB-SubCell"/>
</dbReference>
<dbReference type="GO" id="GO:0004125">
    <property type="term" value="F:L-seryl-tRNA(Sec) selenium transferase activity"/>
    <property type="evidence" value="ECO:0007669"/>
    <property type="project" value="UniProtKB-UniRule"/>
</dbReference>
<dbReference type="GO" id="GO:0001717">
    <property type="term" value="P:conversion of seryl-tRNAsec to selenocys-tRNAsec"/>
    <property type="evidence" value="ECO:0007669"/>
    <property type="project" value="UniProtKB-UniRule"/>
</dbReference>
<dbReference type="GO" id="GO:0001514">
    <property type="term" value="P:selenocysteine incorporation"/>
    <property type="evidence" value="ECO:0007669"/>
    <property type="project" value="UniProtKB-UniRule"/>
</dbReference>
<dbReference type="FunFam" id="3.40.640.10:FF:000028">
    <property type="entry name" value="L-seryl-tRNA(Sec) selenium transferase"/>
    <property type="match status" value="1"/>
</dbReference>
<dbReference type="Gene3D" id="3.90.1150.180">
    <property type="match status" value="1"/>
</dbReference>
<dbReference type="Gene3D" id="3.40.640.10">
    <property type="entry name" value="Type I PLP-dependent aspartate aminotransferase-like (Major domain)"/>
    <property type="match status" value="1"/>
</dbReference>
<dbReference type="HAMAP" id="MF_00423">
    <property type="entry name" value="SelA"/>
    <property type="match status" value="1"/>
</dbReference>
<dbReference type="InterPro" id="IPR015424">
    <property type="entry name" value="PyrdxlP-dep_Trfase"/>
</dbReference>
<dbReference type="InterPro" id="IPR015421">
    <property type="entry name" value="PyrdxlP-dep_Trfase_major"/>
</dbReference>
<dbReference type="InterPro" id="IPR018319">
    <property type="entry name" value="SelA-like"/>
</dbReference>
<dbReference type="InterPro" id="IPR004534">
    <property type="entry name" value="SelA_trans"/>
</dbReference>
<dbReference type="InterPro" id="IPR025862">
    <property type="entry name" value="SelA_trans_N_dom"/>
</dbReference>
<dbReference type="NCBIfam" id="TIGR00474">
    <property type="entry name" value="selA"/>
    <property type="match status" value="1"/>
</dbReference>
<dbReference type="PANTHER" id="PTHR32328">
    <property type="entry name" value="L-SERYL-TRNA(SEC) SELENIUM TRANSFERASE"/>
    <property type="match status" value="1"/>
</dbReference>
<dbReference type="PANTHER" id="PTHR32328:SF0">
    <property type="entry name" value="L-SERYL-TRNA(SEC) SELENIUM TRANSFERASE"/>
    <property type="match status" value="1"/>
</dbReference>
<dbReference type="Pfam" id="PF12390">
    <property type="entry name" value="Se-cys_synth_N"/>
    <property type="match status" value="1"/>
</dbReference>
<dbReference type="Pfam" id="PF03841">
    <property type="entry name" value="SelA"/>
    <property type="match status" value="1"/>
</dbReference>
<dbReference type="SUPFAM" id="SSF53383">
    <property type="entry name" value="PLP-dependent transferases"/>
    <property type="match status" value="1"/>
</dbReference>
<name>SELA_EDWI9</name>
<proteinExistence type="inferred from homology"/>
<protein>
    <recommendedName>
        <fullName evidence="1">L-seryl-tRNA(Sec) selenium transferase</fullName>
        <ecNumber evidence="1">2.9.1.1</ecNumber>
    </recommendedName>
    <alternativeName>
        <fullName evidence="1">Selenocysteine synthase</fullName>
        <shortName evidence="1">Sec synthase</shortName>
    </alternativeName>
    <alternativeName>
        <fullName evidence="1">Selenocysteinyl-tRNA(Sec) synthase</fullName>
    </alternativeName>
</protein>
<comment type="function">
    <text evidence="1">Converts seryl-tRNA(Sec) to selenocysteinyl-tRNA(Sec) required for selenoprotein biosynthesis.</text>
</comment>
<comment type="catalytic activity">
    <reaction evidence="1">
        <text>L-seryl-tRNA(Sec) + selenophosphate + H(+) = L-selenocysteinyl-tRNA(Sec) + phosphate</text>
        <dbReference type="Rhea" id="RHEA:22728"/>
        <dbReference type="Rhea" id="RHEA-COMP:9742"/>
        <dbReference type="Rhea" id="RHEA-COMP:9743"/>
        <dbReference type="ChEBI" id="CHEBI:15378"/>
        <dbReference type="ChEBI" id="CHEBI:16144"/>
        <dbReference type="ChEBI" id="CHEBI:43474"/>
        <dbReference type="ChEBI" id="CHEBI:78533"/>
        <dbReference type="ChEBI" id="CHEBI:78573"/>
        <dbReference type="EC" id="2.9.1.1"/>
    </reaction>
</comment>
<comment type="cofactor">
    <cofactor evidence="1">
        <name>pyridoxal 5'-phosphate</name>
        <dbReference type="ChEBI" id="CHEBI:597326"/>
    </cofactor>
</comment>
<comment type="pathway">
    <text evidence="1">Aminoacyl-tRNA biosynthesis; selenocysteinyl-tRNA(Sec) biosynthesis; selenocysteinyl-tRNA(Sec) from L-seryl-tRNA(Sec) (bacterial route): step 1/1.</text>
</comment>
<comment type="subunit">
    <text evidence="1">Homodecamer; pentamer of dimers. Binds only one seryl-tRNA(Sec) per dimer.</text>
</comment>
<comment type="subcellular location">
    <subcellularLocation>
        <location evidence="1">Cytoplasm</location>
    </subcellularLocation>
</comment>
<comment type="similarity">
    <text evidence="1">Belongs to the SelA family.</text>
</comment>
<sequence length="463" mass="50152">MSSDSQVLYSQIPAIDTLLRTPACAALQAQYGSQLVTQALRSLQQQARHAIQRQQALPDWCVDWGVACTRRLAETLQPAMRRVFNLTGTVLHTNLGRALLPDTAIAAAAGAMGAPVTLEYDLDDAGRGHRDRAIADRLCALTGAEDACIVNNNAAAVLLMLATLAPGRDVIVSRGELVEIGGAFRIPDVMTQAGCRLREVGTTNRTHLHDYRQAIGEHSALLMKVHTSNYAIAGFTAAVSEAELAALGQEYGLPVISDLGSGSLLDMAHYGLPAEPMPQRMLADGVDLVSFSGDKLLGGPQAGIIVGRRELIHRLQRHPLKRALRCGKMTLAALDATLQLYQQPEKLRQALPTLRHLTREASEIAACGERLLARLRPHYEEAFVLTLEPCLSQIGSGSLPVDRLPSHAITLTPRDGRGGTLTALADRWRALPCPVIGRLQEGKLWLDLRCLDDEQALLQELCQ</sequence>
<accession>C5BC01</accession>
<organism>
    <name type="scientific">Edwardsiella ictaluri (strain 93-146)</name>
    <dbReference type="NCBI Taxonomy" id="634503"/>
    <lineage>
        <taxon>Bacteria</taxon>
        <taxon>Pseudomonadati</taxon>
        <taxon>Pseudomonadota</taxon>
        <taxon>Gammaproteobacteria</taxon>
        <taxon>Enterobacterales</taxon>
        <taxon>Hafniaceae</taxon>
        <taxon>Edwardsiella</taxon>
    </lineage>
</organism>
<reference key="1">
    <citation type="submission" date="2009-03" db="EMBL/GenBank/DDBJ databases">
        <title>Complete genome sequence of Edwardsiella ictaluri 93-146.</title>
        <authorList>
            <person name="Williams M.L."/>
            <person name="Gillaspy A.F."/>
            <person name="Dyer D.W."/>
            <person name="Thune R.L."/>
            <person name="Waldbieser G.C."/>
            <person name="Schuster S.C."/>
            <person name="Gipson J."/>
            <person name="Zaitshik J."/>
            <person name="Landry C."/>
            <person name="Lawrence M.L."/>
        </authorList>
    </citation>
    <scope>NUCLEOTIDE SEQUENCE [LARGE SCALE GENOMIC DNA]</scope>
    <source>
        <strain>93-146</strain>
    </source>
</reference>
<gene>
    <name evidence="1" type="primary">selA</name>
    <name type="ordered locus">NT01EI_3472</name>
</gene>
<keyword id="KW-0963">Cytoplasm</keyword>
<keyword id="KW-0648">Protein biosynthesis</keyword>
<keyword id="KW-0663">Pyridoxal phosphate</keyword>
<keyword id="KW-0711">Selenium</keyword>
<keyword id="KW-0808">Transferase</keyword>
<feature type="chain" id="PRO_1000206059" description="L-seryl-tRNA(Sec) selenium transferase">
    <location>
        <begin position="1"/>
        <end position="463"/>
    </location>
</feature>
<feature type="modified residue" description="N6-(pyridoxal phosphate)lysine" evidence="1">
    <location>
        <position position="295"/>
    </location>
</feature>